<keyword id="KW-0963">Cytoplasm</keyword>
<keyword id="KW-0255">Endonuclease</keyword>
<keyword id="KW-0378">Hydrolase</keyword>
<keyword id="KW-0464">Manganese</keyword>
<keyword id="KW-0479">Metal-binding</keyword>
<keyword id="KW-0540">Nuclease</keyword>
<sequence length="193" mass="21438">MEVDLLHFEKKYHNCIVAGIDEAGRGPLAGPVVASAVIVDNANIITGIKDSKKLSKKKRELLYEQITSNYVWATAIISHTEIDDINILEATKKACSIAVANLSLEPEIVLVDGNMQFKDERFVSIINGDNLSLSIAAASIVAKVTRDRLMLDLSAEFPQYLWHKNSGYGTKEHIEAINIHGLSPYHRRSFRCC</sequence>
<evidence type="ECO:0000255" key="1">
    <source>
        <dbReference type="HAMAP-Rule" id="MF_00052"/>
    </source>
</evidence>
<evidence type="ECO:0000255" key="2">
    <source>
        <dbReference type="PROSITE-ProRule" id="PRU01319"/>
    </source>
</evidence>
<accession>Q92J05</accession>
<feature type="chain" id="PRO_0000111611" description="Ribonuclease HII">
    <location>
        <begin position="1"/>
        <end position="193"/>
    </location>
</feature>
<feature type="domain" description="RNase H type-2" evidence="2">
    <location>
        <begin position="15"/>
        <end position="193"/>
    </location>
</feature>
<feature type="binding site" evidence="1">
    <location>
        <position position="21"/>
    </location>
    <ligand>
        <name>a divalent metal cation</name>
        <dbReference type="ChEBI" id="CHEBI:60240"/>
    </ligand>
</feature>
<feature type="binding site" evidence="1">
    <location>
        <position position="22"/>
    </location>
    <ligand>
        <name>a divalent metal cation</name>
        <dbReference type="ChEBI" id="CHEBI:60240"/>
    </ligand>
</feature>
<feature type="binding site" evidence="1">
    <location>
        <position position="112"/>
    </location>
    <ligand>
        <name>a divalent metal cation</name>
        <dbReference type="ChEBI" id="CHEBI:60240"/>
    </ligand>
</feature>
<name>RNH2_RICCN</name>
<dbReference type="EC" id="3.1.26.4" evidence="1"/>
<dbReference type="EMBL" id="AE006914">
    <property type="protein sequence ID" value="AAL02802.1"/>
    <property type="molecule type" value="Genomic_DNA"/>
</dbReference>
<dbReference type="PIR" id="H97732">
    <property type="entry name" value="H97732"/>
</dbReference>
<dbReference type="RefSeq" id="WP_010976924.1">
    <property type="nucleotide sequence ID" value="NC_003103.1"/>
</dbReference>
<dbReference type="SMR" id="Q92J05"/>
<dbReference type="GeneID" id="927914"/>
<dbReference type="KEGG" id="rco:RC0264"/>
<dbReference type="HOGENOM" id="CLU_036532_3_1_5"/>
<dbReference type="Proteomes" id="UP000000816">
    <property type="component" value="Chromosome"/>
</dbReference>
<dbReference type="GO" id="GO:0005737">
    <property type="term" value="C:cytoplasm"/>
    <property type="evidence" value="ECO:0007669"/>
    <property type="project" value="UniProtKB-SubCell"/>
</dbReference>
<dbReference type="GO" id="GO:0032299">
    <property type="term" value="C:ribonuclease H2 complex"/>
    <property type="evidence" value="ECO:0007669"/>
    <property type="project" value="TreeGrafter"/>
</dbReference>
<dbReference type="GO" id="GO:0030145">
    <property type="term" value="F:manganese ion binding"/>
    <property type="evidence" value="ECO:0007669"/>
    <property type="project" value="UniProtKB-UniRule"/>
</dbReference>
<dbReference type="GO" id="GO:0003723">
    <property type="term" value="F:RNA binding"/>
    <property type="evidence" value="ECO:0007669"/>
    <property type="project" value="InterPro"/>
</dbReference>
<dbReference type="GO" id="GO:0004523">
    <property type="term" value="F:RNA-DNA hybrid ribonuclease activity"/>
    <property type="evidence" value="ECO:0007669"/>
    <property type="project" value="UniProtKB-UniRule"/>
</dbReference>
<dbReference type="GO" id="GO:0043137">
    <property type="term" value="P:DNA replication, removal of RNA primer"/>
    <property type="evidence" value="ECO:0007669"/>
    <property type="project" value="TreeGrafter"/>
</dbReference>
<dbReference type="GO" id="GO:0006298">
    <property type="term" value="P:mismatch repair"/>
    <property type="evidence" value="ECO:0007669"/>
    <property type="project" value="TreeGrafter"/>
</dbReference>
<dbReference type="CDD" id="cd07182">
    <property type="entry name" value="RNase_HII_bacteria_HII_like"/>
    <property type="match status" value="1"/>
</dbReference>
<dbReference type="Gene3D" id="3.30.420.10">
    <property type="entry name" value="Ribonuclease H-like superfamily/Ribonuclease H"/>
    <property type="match status" value="1"/>
</dbReference>
<dbReference type="HAMAP" id="MF_00052_B">
    <property type="entry name" value="RNase_HII_B"/>
    <property type="match status" value="1"/>
</dbReference>
<dbReference type="InterPro" id="IPR022898">
    <property type="entry name" value="RNase_HII"/>
</dbReference>
<dbReference type="InterPro" id="IPR001352">
    <property type="entry name" value="RNase_HII/HIII"/>
</dbReference>
<dbReference type="InterPro" id="IPR024567">
    <property type="entry name" value="RNase_HII/HIII_dom"/>
</dbReference>
<dbReference type="InterPro" id="IPR012337">
    <property type="entry name" value="RNaseH-like_sf"/>
</dbReference>
<dbReference type="InterPro" id="IPR036397">
    <property type="entry name" value="RNaseH_sf"/>
</dbReference>
<dbReference type="NCBIfam" id="NF000595">
    <property type="entry name" value="PRK00015.1-3"/>
    <property type="match status" value="1"/>
</dbReference>
<dbReference type="PANTHER" id="PTHR10954">
    <property type="entry name" value="RIBONUCLEASE H2 SUBUNIT A"/>
    <property type="match status" value="1"/>
</dbReference>
<dbReference type="PANTHER" id="PTHR10954:SF18">
    <property type="entry name" value="RIBONUCLEASE HII"/>
    <property type="match status" value="1"/>
</dbReference>
<dbReference type="Pfam" id="PF01351">
    <property type="entry name" value="RNase_HII"/>
    <property type="match status" value="1"/>
</dbReference>
<dbReference type="SUPFAM" id="SSF53098">
    <property type="entry name" value="Ribonuclease H-like"/>
    <property type="match status" value="1"/>
</dbReference>
<dbReference type="PROSITE" id="PS51975">
    <property type="entry name" value="RNASE_H_2"/>
    <property type="match status" value="1"/>
</dbReference>
<protein>
    <recommendedName>
        <fullName evidence="1">Ribonuclease HII</fullName>
        <shortName evidence="1">RNase HII</shortName>
        <ecNumber evidence="1">3.1.26.4</ecNumber>
    </recommendedName>
</protein>
<gene>
    <name evidence="1" type="primary">rnhB</name>
    <name type="ordered locus">RC0264</name>
</gene>
<organism>
    <name type="scientific">Rickettsia conorii (strain ATCC VR-613 / Malish 7)</name>
    <dbReference type="NCBI Taxonomy" id="272944"/>
    <lineage>
        <taxon>Bacteria</taxon>
        <taxon>Pseudomonadati</taxon>
        <taxon>Pseudomonadota</taxon>
        <taxon>Alphaproteobacteria</taxon>
        <taxon>Rickettsiales</taxon>
        <taxon>Rickettsiaceae</taxon>
        <taxon>Rickettsieae</taxon>
        <taxon>Rickettsia</taxon>
        <taxon>spotted fever group</taxon>
    </lineage>
</organism>
<proteinExistence type="inferred from homology"/>
<comment type="function">
    <text evidence="1">Endonuclease that specifically degrades the RNA of RNA-DNA hybrids.</text>
</comment>
<comment type="catalytic activity">
    <reaction evidence="1">
        <text>Endonucleolytic cleavage to 5'-phosphomonoester.</text>
        <dbReference type="EC" id="3.1.26.4"/>
    </reaction>
</comment>
<comment type="cofactor">
    <cofactor evidence="1">
        <name>Mn(2+)</name>
        <dbReference type="ChEBI" id="CHEBI:29035"/>
    </cofactor>
    <cofactor evidence="1">
        <name>Mg(2+)</name>
        <dbReference type="ChEBI" id="CHEBI:18420"/>
    </cofactor>
    <text evidence="1">Manganese or magnesium. Binds 1 divalent metal ion per monomer in the absence of substrate. May bind a second metal ion after substrate binding.</text>
</comment>
<comment type="subcellular location">
    <subcellularLocation>
        <location evidence="1">Cytoplasm</location>
    </subcellularLocation>
</comment>
<comment type="similarity">
    <text evidence="1">Belongs to the RNase HII family.</text>
</comment>
<reference key="1">
    <citation type="journal article" date="2001" name="Science">
        <title>Mechanisms of evolution in Rickettsia conorii and R. prowazekii.</title>
        <authorList>
            <person name="Ogata H."/>
            <person name="Audic S."/>
            <person name="Renesto-Audiffren P."/>
            <person name="Fournier P.-E."/>
            <person name="Barbe V."/>
            <person name="Samson D."/>
            <person name="Roux V."/>
            <person name="Cossart P."/>
            <person name="Weissenbach J."/>
            <person name="Claverie J.-M."/>
            <person name="Raoult D."/>
        </authorList>
    </citation>
    <scope>NUCLEOTIDE SEQUENCE [LARGE SCALE GENOMIC DNA]</scope>
    <source>
        <strain>ATCC VR-613 / Malish 7</strain>
    </source>
</reference>